<comment type="function">
    <text evidence="5 6 7 8 9 10 11 12 13 14">Member of the two-component regulatory system SaeR/SaeS involved in the regulation of staphylococcal virulence factors in a strain-dependent fashion. Probably functions as a membrane-associated protein kinase that upon sensing the appropriate signal, autophosphorylates and in turn activates the cytosolic response regulator SaeR. SaeR/SaeS activates the expression of exoproteins involved in adhesion and invasion of host cells, including hemolysins (hla, hlb, hlgC), coa, DNase, spa and cell wall-associated proteins (emp, eap, fnbA, fnbB, efb). Represses the expression of type 5 capsular polysaccharide (cap operon). Also modulates the expression of several other genes.</text>
</comment>
<comment type="catalytic activity">
    <reaction>
        <text>ATP + protein L-histidine = ADP + protein N-phospho-L-histidine.</text>
        <dbReference type="EC" id="2.7.13.3"/>
    </reaction>
</comment>
<comment type="subcellular location">
    <subcellularLocation>
        <location evidence="1">Cell membrane</location>
        <topology evidence="1">Multi-pass membrane protein</topology>
    </subcellularLocation>
</comment>
<comment type="PTM">
    <text evidence="1">Autophosphorylated.</text>
</comment>
<comment type="sequence caution" evidence="15">
    <conflict type="erroneous initiation">
        <sequence resource="EMBL-CDS" id="AAD48403"/>
    </conflict>
</comment>
<feature type="chain" id="PRO_0000295929" description="Histidine protein kinase SaeS">
    <location>
        <begin position="1"/>
        <end position="351"/>
    </location>
</feature>
<feature type="transmembrane region" description="Helical" evidence="2">
    <location>
        <begin position="9"/>
        <end position="29"/>
    </location>
</feature>
<feature type="transmembrane region" description="Helical" evidence="2">
    <location>
        <begin position="40"/>
        <end position="60"/>
    </location>
</feature>
<feature type="domain" description="HAMP" evidence="3">
    <location>
        <begin position="61"/>
        <end position="114"/>
    </location>
</feature>
<feature type="domain" description="Histidine kinase" evidence="4">
    <location>
        <begin position="129"/>
        <end position="348"/>
    </location>
</feature>
<feature type="modified residue" description="Phosphohistidine; by autocatalysis" evidence="4">
    <location>
        <position position="132"/>
    </location>
</feature>
<feature type="sequence conflict" description="In Ref. 1; AAD48403." evidence="15" ref="1">
    <original>Q</original>
    <variation>P</variation>
    <location>
        <position position="76"/>
    </location>
</feature>
<feature type="sequence conflict" description="In Ref. 1; AAD48403." evidence="15" ref="1">
    <original>QPYEQRIKHENR</original>
    <variation>PTIGATYPNMKTA</variation>
    <location>
        <begin position="208"/>
        <end position="219"/>
    </location>
</feature>
<feature type="sequence conflict" description="In Ref. 1; AAD48403." evidence="15" ref="1">
    <original>NEIDAFYQYRTP</original>
    <variation>KRNSCILSISKRQ</variation>
    <location>
        <begin position="227"/>
        <end position="238"/>
    </location>
</feature>
<feature type="sequence conflict" description="In Ref. 1; AAD48403." evidence="15" ref="1">
    <original>TNLLD</original>
    <variation>NKTYLM</variation>
    <location>
        <begin position="244"/>
        <end position="248"/>
    </location>
</feature>
<feature type="sequence conflict" description="In Ref. 1; AAD48403." evidence="15" ref="1">
    <original>E</original>
    <variation>G</variation>
    <location>
        <position position="280"/>
    </location>
</feature>
<feature type="sequence conflict" description="In Ref. 1; AAD48403." evidence="15" ref="1">
    <original>S</original>
    <variation>R</variation>
    <location>
        <position position="331"/>
    </location>
</feature>
<feature type="sequence conflict" description="In Ref. 1; AAD48403." evidence="15" ref="1">
    <original>M</original>
    <variation>V</variation>
    <location>
        <position position="340"/>
    </location>
</feature>
<keyword id="KW-0067">ATP-binding</keyword>
<keyword id="KW-1003">Cell membrane</keyword>
<keyword id="KW-0418">Kinase</keyword>
<keyword id="KW-0472">Membrane</keyword>
<keyword id="KW-0547">Nucleotide-binding</keyword>
<keyword id="KW-0597">Phosphoprotein</keyword>
<keyword id="KW-0808">Transferase</keyword>
<keyword id="KW-0812">Transmembrane</keyword>
<keyword id="KW-1133">Transmembrane helix</keyword>
<keyword id="KW-0902">Two-component regulatory system</keyword>
<keyword id="KW-0843">Virulence</keyword>
<proteinExistence type="evidence at protein level"/>
<name>SAES_STAAE</name>
<protein>
    <recommendedName>
        <fullName>Histidine protein kinase SaeS</fullName>
        <ecNumber>2.7.13.3</ecNumber>
    </recommendedName>
    <alternativeName>
        <fullName>Sensor protein SaeS</fullName>
    </alternativeName>
    <alternativeName>
        <fullName>Staphylococcus exoprotein expression protein S</fullName>
    </alternativeName>
</protein>
<gene>
    <name type="primary">saeS</name>
    <name type="ordered locus">NWMN_0674</name>
</gene>
<organism>
    <name type="scientific">Staphylococcus aureus (strain Newman)</name>
    <dbReference type="NCBI Taxonomy" id="426430"/>
    <lineage>
        <taxon>Bacteria</taxon>
        <taxon>Bacillati</taxon>
        <taxon>Bacillota</taxon>
        <taxon>Bacilli</taxon>
        <taxon>Bacillales</taxon>
        <taxon>Staphylococcaceae</taxon>
        <taxon>Staphylococcus</taxon>
    </lineage>
</organism>
<accession>Q840P7</accession>
<accession>A6QF14</accession>
<accession>Q9S4L8</accession>
<reference key="1">
    <citation type="journal article" date="1999" name="FEMS Microbiol. Lett.">
        <title>The sae locus of Staphylococcus aureus encodes a two-component regulatory system.</title>
        <authorList>
            <person name="Giraudo A.T."/>
            <person name="Calzolari A."/>
            <person name="Cataldi A.A."/>
            <person name="Bogni C."/>
            <person name="Nagel R."/>
        </authorList>
    </citation>
    <scope>NUCLEOTIDE SEQUENCE [GENOMIC DNA]</scope>
    <scope>FUNCTION IN REGULATION OF EXOPROTEINS SYNTHESIS</scope>
</reference>
<reference key="2">
    <citation type="journal article" date="2003" name="J. Bacteriol.">
        <title>Molecular architecture of the regulatory locus sae of Staphylococcus aureus and its impact on expression of virulence factors.</title>
        <authorList>
            <person name="Steinhuber A."/>
            <person name="Goerke C."/>
            <person name="Bayer M.G."/>
            <person name="Doering G."/>
            <person name="Wolz C."/>
        </authorList>
    </citation>
    <scope>NUCLEOTIDE SEQUENCE [GENOMIC DNA]</scope>
    <scope>FUNCTION IN REGULATION OF EXOPROTEINS AND TYPE 5 CAPSULAR POLYSACCHARIDE SYNTHESIS</scope>
</reference>
<reference key="3">
    <citation type="journal article" date="2008" name="J. Bacteriol.">
        <title>Genome sequence of Staphylococcus aureus strain Newman and comparative analysis of staphylococcal genomes: polymorphism and evolution of two major pathogenicity islands.</title>
        <authorList>
            <person name="Baba T."/>
            <person name="Bae T."/>
            <person name="Schneewind O."/>
            <person name="Takeuchi F."/>
            <person name="Hiramatsu K."/>
        </authorList>
    </citation>
    <scope>NUCLEOTIDE SEQUENCE [LARGE SCALE GENOMIC DNA]</scope>
    <source>
        <strain>Newman</strain>
    </source>
</reference>
<reference key="4">
    <citation type="journal article" date="1994" name="Can. J. Microbiol.">
        <title>Characterization of a Tn551-mutant of Staphylococcus aureus defective in the production of several exoproteins.</title>
        <authorList>
            <person name="Giraudo A.T."/>
            <person name="Raspanti C.G."/>
            <person name="Calzolari A."/>
            <person name="Nagel R."/>
        </authorList>
    </citation>
    <scope>FUNCTION IN REGULATION OF EXOPROTEINS SYNTHESIS</scope>
    <source>
        <strain>ATCC 13565 / 196E</strain>
    </source>
</reference>
<reference key="5">
    <citation type="journal article" date="1997" name="Arch. Microbiol.">
        <title>The sae locus of Staphylococcus aureus controls exoprotein synthesis at the transcriptional level.</title>
        <authorList>
            <person name="Giraudo A.T."/>
            <person name="Cheung A.L."/>
            <person name="Nagel R."/>
        </authorList>
    </citation>
    <scope>FUNCTION IN REGULATION OF EXOPROTEINS SYNTHESIS</scope>
</reference>
<reference key="6">
    <citation type="journal article" date="2001" name="Mol. Microbiol.">
        <title>Impact of the regulatory loci agr, sarA and sae of Staphylococcus aureus on the induction of alpha-toxin during device-related infection resolved by direct quantitative transcript analysis.</title>
        <authorList>
            <person name="Goerke C."/>
            <person name="Fluckiger U."/>
            <person name="Steinhuber A."/>
            <person name="Zimmerli W."/>
            <person name="Wolz C."/>
        </authorList>
    </citation>
    <scope>FUNCTION IN REGULATION OF EXOPROTEINS SYNTHESIS</scope>
</reference>
<reference key="7">
    <citation type="journal article" date="2005" name="Infect. Immun.">
        <title>Role of Staphylococcus aureus global regulators sae and sigmaB in virulence gene expression during device-related infection.</title>
        <authorList>
            <person name="Goerke C."/>
            <person name="Fluckiger U."/>
            <person name="Steinhuber A."/>
            <person name="Bisanzio V."/>
            <person name="Ulrich M."/>
            <person name="Bischoff M."/>
            <person name="Patti J.M."/>
            <person name="Wolz C."/>
        </authorList>
    </citation>
    <scope>FUNCTION IN REGULATION OF EXOPROTEINS SYNTHESIS</scope>
</reference>
<reference key="8">
    <citation type="journal article" date="2005" name="Microbiology">
        <title>Sae is essential for expression of the staphylococcal adhesins Eap and Emp.</title>
        <authorList>
            <person name="Harraghy N."/>
            <person name="Kormanec J."/>
            <person name="Wolz C."/>
            <person name="Homerova D."/>
            <person name="Goerke C."/>
            <person name="Ohlsen K."/>
            <person name="Qazi S."/>
            <person name="Hill P."/>
            <person name="Herrmann M."/>
        </authorList>
    </citation>
    <scope>FUNCTION IN REGULATION OF ADHESIN SYNTHESIS</scope>
</reference>
<reference key="9">
    <citation type="journal article" date="2006" name="FEMS Microbiol. Lett.">
        <title>Expression of gamma-hemolysin regulated by sae in Staphylococcus aureus strain Smith 5R.</title>
        <authorList>
            <person name="Yamazaki K."/>
            <person name="Kato F."/>
            <person name="Kamio Y."/>
            <person name="Kaneko J."/>
        </authorList>
    </citation>
    <scope>FUNCTION IN REGULATION OF EXOPROTEINS SYNTHESIS</scope>
    <source>
        <strain>Smith</strain>
    </source>
</reference>
<reference key="10">
    <citation type="journal article" date="2006" name="Infect. Immun.">
        <title>Inactivation of a two-component signal transduction system, saeRS, eliminates adherence and attenuates virulence of Staphylococcus aureus.</title>
        <authorList>
            <person name="Liang X."/>
            <person name="Yu C."/>
            <person name="Sun J."/>
            <person name="Liu H."/>
            <person name="Landwehr C."/>
            <person name="Holmes D."/>
            <person name="Ji Y."/>
        </authorList>
    </citation>
    <scope>FUNCTION IN REGULATION OF EXOPROTEINS SYNTHESIS</scope>
    <scope>VIRULENCE</scope>
    <source>
        <strain>WCUH29 / NCIMB 40771</strain>
    </source>
</reference>
<reference key="11">
    <citation type="journal article" date="2006" name="J. Bacteriol.">
        <title>Influence of the two-component system saeRS on global gene expression in two different Staphylococcus aureus strains.</title>
        <authorList>
            <person name="Rogasch K."/>
            <person name="Ruehmling V."/>
            <person name="Pane-Farre J."/>
            <person name="Hoeper D."/>
            <person name="Weinberg C."/>
            <person name="Fuchs S."/>
            <person name="Schmudde M."/>
            <person name="Broeker B.M."/>
            <person name="Wolz C."/>
            <person name="Hecker M."/>
            <person name="Engelmann S."/>
        </authorList>
    </citation>
    <scope>FUNCTION IN GLOBAL REGULATION</scope>
</reference>
<dbReference type="EC" id="2.7.13.3"/>
<dbReference type="EMBL" id="AF129010">
    <property type="protein sequence ID" value="AAD48403.1"/>
    <property type="status" value="ALT_INIT"/>
    <property type="molecule type" value="Genomic_DNA"/>
</dbReference>
<dbReference type="EMBL" id="AJ556794">
    <property type="protein sequence ID" value="CAD89111.1"/>
    <property type="molecule type" value="Genomic_DNA"/>
</dbReference>
<dbReference type="EMBL" id="AP009351">
    <property type="protein sequence ID" value="BAF66946.1"/>
    <property type="molecule type" value="Genomic_DNA"/>
</dbReference>
<dbReference type="RefSeq" id="WP_000244421.1">
    <property type="nucleotide sequence ID" value="NZ_JBBIAE010000002.1"/>
</dbReference>
<dbReference type="SMR" id="Q840P7"/>
<dbReference type="KEGG" id="sae:NWMN_0674"/>
<dbReference type="HOGENOM" id="CLU_000445_89_3_9"/>
<dbReference type="BRENDA" id="2.7.13.3">
    <property type="organism ID" value="3352"/>
</dbReference>
<dbReference type="PHI-base" id="PHI:123353"/>
<dbReference type="Proteomes" id="UP000006386">
    <property type="component" value="Chromosome"/>
</dbReference>
<dbReference type="GO" id="GO:0005886">
    <property type="term" value="C:plasma membrane"/>
    <property type="evidence" value="ECO:0007669"/>
    <property type="project" value="UniProtKB-SubCell"/>
</dbReference>
<dbReference type="GO" id="GO:0005524">
    <property type="term" value="F:ATP binding"/>
    <property type="evidence" value="ECO:0007669"/>
    <property type="project" value="UniProtKB-KW"/>
</dbReference>
<dbReference type="GO" id="GO:0004721">
    <property type="term" value="F:phosphoprotein phosphatase activity"/>
    <property type="evidence" value="ECO:0007669"/>
    <property type="project" value="TreeGrafter"/>
</dbReference>
<dbReference type="GO" id="GO:0000155">
    <property type="term" value="F:phosphorelay sensor kinase activity"/>
    <property type="evidence" value="ECO:0007669"/>
    <property type="project" value="InterPro"/>
</dbReference>
<dbReference type="GO" id="GO:0016036">
    <property type="term" value="P:cellular response to phosphate starvation"/>
    <property type="evidence" value="ECO:0007669"/>
    <property type="project" value="TreeGrafter"/>
</dbReference>
<dbReference type="CDD" id="cd00075">
    <property type="entry name" value="HATPase"/>
    <property type="match status" value="1"/>
</dbReference>
<dbReference type="CDD" id="cd00082">
    <property type="entry name" value="HisKA"/>
    <property type="match status" value="1"/>
</dbReference>
<dbReference type="FunFam" id="1.10.287.130:FF:000077">
    <property type="entry name" value="Sensor histidine kinase SaeS"/>
    <property type="match status" value="1"/>
</dbReference>
<dbReference type="Gene3D" id="1.10.287.130">
    <property type="match status" value="1"/>
</dbReference>
<dbReference type="Gene3D" id="6.10.340.10">
    <property type="match status" value="1"/>
</dbReference>
<dbReference type="Gene3D" id="3.30.565.10">
    <property type="entry name" value="Histidine kinase-like ATPase, C-terminal domain"/>
    <property type="match status" value="1"/>
</dbReference>
<dbReference type="InterPro" id="IPR050351">
    <property type="entry name" value="2-comp_sensor_kinase"/>
</dbReference>
<dbReference type="InterPro" id="IPR003660">
    <property type="entry name" value="HAMP_dom"/>
</dbReference>
<dbReference type="InterPro" id="IPR036890">
    <property type="entry name" value="HATPase_C_sf"/>
</dbReference>
<dbReference type="InterPro" id="IPR005467">
    <property type="entry name" value="His_kinase_dom"/>
</dbReference>
<dbReference type="InterPro" id="IPR003661">
    <property type="entry name" value="HisK_dim/P_dom"/>
</dbReference>
<dbReference type="InterPro" id="IPR036097">
    <property type="entry name" value="HisK_dim/P_sf"/>
</dbReference>
<dbReference type="InterPro" id="IPR004358">
    <property type="entry name" value="Sig_transdc_His_kin-like_C"/>
</dbReference>
<dbReference type="PANTHER" id="PTHR45453">
    <property type="entry name" value="PHOSPHATE REGULON SENSOR PROTEIN PHOR"/>
    <property type="match status" value="1"/>
</dbReference>
<dbReference type="PANTHER" id="PTHR45453:SF1">
    <property type="entry name" value="PHOSPHATE REGULON SENSOR PROTEIN PHOR"/>
    <property type="match status" value="1"/>
</dbReference>
<dbReference type="Pfam" id="PF00672">
    <property type="entry name" value="HAMP"/>
    <property type="match status" value="1"/>
</dbReference>
<dbReference type="Pfam" id="PF02518">
    <property type="entry name" value="HATPase_c"/>
    <property type="match status" value="1"/>
</dbReference>
<dbReference type="Pfam" id="PF00512">
    <property type="entry name" value="HisKA"/>
    <property type="match status" value="1"/>
</dbReference>
<dbReference type="PRINTS" id="PR00344">
    <property type="entry name" value="BCTRLSENSOR"/>
</dbReference>
<dbReference type="SMART" id="SM00387">
    <property type="entry name" value="HATPase_c"/>
    <property type="match status" value="1"/>
</dbReference>
<dbReference type="SMART" id="SM00388">
    <property type="entry name" value="HisKA"/>
    <property type="match status" value="1"/>
</dbReference>
<dbReference type="SUPFAM" id="SSF55874">
    <property type="entry name" value="ATPase domain of HSP90 chaperone/DNA topoisomerase II/histidine kinase"/>
    <property type="match status" value="1"/>
</dbReference>
<dbReference type="SUPFAM" id="SSF47384">
    <property type="entry name" value="Homodimeric domain of signal transducing histidine kinase"/>
    <property type="match status" value="1"/>
</dbReference>
<dbReference type="PROSITE" id="PS50885">
    <property type="entry name" value="HAMP"/>
    <property type="match status" value="1"/>
</dbReference>
<dbReference type="PROSITE" id="PS50109">
    <property type="entry name" value="HIS_KIN"/>
    <property type="match status" value="1"/>
</dbReference>
<evidence type="ECO:0000250" key="1"/>
<evidence type="ECO:0000255" key="2"/>
<evidence type="ECO:0000255" key="3">
    <source>
        <dbReference type="PROSITE-ProRule" id="PRU00102"/>
    </source>
</evidence>
<evidence type="ECO:0000255" key="4">
    <source>
        <dbReference type="PROSITE-ProRule" id="PRU00107"/>
    </source>
</evidence>
<evidence type="ECO:0000269" key="5">
    <source>
    </source>
</evidence>
<evidence type="ECO:0000269" key="6">
    <source>
    </source>
</evidence>
<evidence type="ECO:0000269" key="7">
    <source>
    </source>
</evidence>
<evidence type="ECO:0000269" key="8">
    <source>
    </source>
</evidence>
<evidence type="ECO:0000269" key="9">
    <source>
    </source>
</evidence>
<evidence type="ECO:0000269" key="10">
    <source>
    </source>
</evidence>
<evidence type="ECO:0000269" key="11">
    <source>
    </source>
</evidence>
<evidence type="ECO:0000269" key="12">
    <source>
    </source>
</evidence>
<evidence type="ECO:0000269" key="13">
    <source>
    </source>
</evidence>
<evidence type="ECO:0000269" key="14">
    <source>
    </source>
</evidence>
<evidence type="ECO:0000305" key="15"/>
<sequence>MVLSIRSQIIIGVVSSIPLTSTILAIAYILMWFNGHMTLTLTLTTIITSCLTLLICSIFINPLIQKIKQFNIKTKQFANGNYASNDKTFNSPKEIYELNQSFNKMASEITQQMNQIKSEQQEKTELIQNLAHDLKTPLASIISYSEGLRDGIITKDHEIKESYDILIKQANRLSTLFDDMTHIITLNTGKTYPPELIQLDQLLVSILQPYEQRIKHENRTLEVNFCNEIDAFYQYRTPLERILTNLLDNALKFSNVGSRIDINISENEDQDTIDIAISDEGIGIIPELQERIFERTFRVENSRNTKTGGSGLGLYIANELAQQNNAKISVSSDIDVGTTMTVTLHKLDITS</sequence>